<dbReference type="EMBL" id="D16263">
    <property type="protein sequence ID" value="BAA03796.1"/>
    <property type="molecule type" value="mRNA"/>
</dbReference>
<dbReference type="EMBL" id="D28599">
    <property type="status" value="NOT_ANNOTATED_CDS"/>
    <property type="molecule type" value="mRNA"/>
</dbReference>
<dbReference type="EMBL" id="D32040">
    <property type="protein sequence ID" value="BAA06802.1"/>
    <property type="molecule type" value="mRNA"/>
</dbReference>
<dbReference type="EMBL" id="AK014525">
    <property type="protein sequence ID" value="BAB29411.3"/>
    <property type="molecule type" value="mRNA"/>
</dbReference>
<dbReference type="PIR" id="A55535">
    <property type="entry name" value="A55535"/>
</dbReference>
<dbReference type="SMR" id="Q62059"/>
<dbReference type="FunCoup" id="Q62059">
    <property type="interactions" value="66"/>
</dbReference>
<dbReference type="IntAct" id="Q62059">
    <property type="interactions" value="2"/>
</dbReference>
<dbReference type="MINT" id="Q62059"/>
<dbReference type="STRING" id="10090.ENSMUSP00000105173"/>
<dbReference type="GlyConnect" id="2818">
    <property type="glycosylation" value="2 N-Linked glycans (1 site)"/>
</dbReference>
<dbReference type="GlyCosmos" id="Q62059">
    <property type="glycosylation" value="17 sites, 2 glycans"/>
</dbReference>
<dbReference type="GlyGen" id="Q62059">
    <property type="glycosylation" value="32 sites, 12 N-linked glycans (6 sites), 1 O-linked glycan (1 site)"/>
</dbReference>
<dbReference type="iPTMnet" id="Q62059"/>
<dbReference type="PhosphoSitePlus" id="Q62059"/>
<dbReference type="SwissPalm" id="Q62059"/>
<dbReference type="jPOST" id="Q62059"/>
<dbReference type="PaxDb" id="10090-ENSMUSP00000105173"/>
<dbReference type="PeptideAtlas" id="Q62059"/>
<dbReference type="ProteomicsDB" id="284036">
    <molecule id="Q62059-1"/>
</dbReference>
<dbReference type="ProteomicsDB" id="284037">
    <molecule id="Q62059-2"/>
</dbReference>
<dbReference type="ProteomicsDB" id="284038">
    <molecule id="Q62059-3"/>
</dbReference>
<dbReference type="ProteomicsDB" id="284039">
    <molecule id="Q62059-4"/>
</dbReference>
<dbReference type="Pumba" id="Q62059"/>
<dbReference type="ABCD" id="Q62059">
    <property type="antibodies" value="2 sequenced antibodies"/>
</dbReference>
<dbReference type="AGR" id="MGI:102889"/>
<dbReference type="MGI" id="MGI:102889">
    <property type="gene designation" value="Vcan"/>
</dbReference>
<dbReference type="eggNOG" id="ENOG502QRBE">
    <property type="taxonomic scope" value="Eukaryota"/>
</dbReference>
<dbReference type="InParanoid" id="Q62059"/>
<dbReference type="PhylomeDB" id="Q62059"/>
<dbReference type="Reactome" id="R-MMU-1971475">
    <property type="pathway name" value="A tetrasaccharide linker sequence is required for GAG synthesis"/>
</dbReference>
<dbReference type="Reactome" id="R-MMU-2022870">
    <property type="pathway name" value="Chondroitin sulfate biosynthesis"/>
</dbReference>
<dbReference type="Reactome" id="R-MMU-2022923">
    <property type="pathway name" value="Dermatan sulfate biosynthesis"/>
</dbReference>
<dbReference type="Reactome" id="R-MMU-2024101">
    <property type="pathway name" value="CS/DS degradation"/>
</dbReference>
<dbReference type="Reactome" id="R-MMU-3000178">
    <property type="pathway name" value="ECM proteoglycans"/>
</dbReference>
<dbReference type="Reactome" id="R-MMU-381426">
    <property type="pathway name" value="Regulation of Insulin-like Growth Factor (IGF) transport and uptake by Insulin-like Growth Factor Binding Proteins (IGFBPs)"/>
</dbReference>
<dbReference type="Reactome" id="R-MMU-8957275">
    <property type="pathway name" value="Post-translational protein phosphorylation"/>
</dbReference>
<dbReference type="CD-CODE" id="CE726F99">
    <property type="entry name" value="Postsynaptic density"/>
</dbReference>
<dbReference type="ChiTaRS" id="Vcan">
    <property type="organism name" value="mouse"/>
</dbReference>
<dbReference type="PRO" id="PR:Q62059"/>
<dbReference type="Proteomes" id="UP000000589">
    <property type="component" value="Unplaced"/>
</dbReference>
<dbReference type="RNAct" id="Q62059">
    <property type="molecule type" value="protein"/>
</dbReference>
<dbReference type="GO" id="GO:0062023">
    <property type="term" value="C:collagen-containing extracellular matrix"/>
    <property type="evidence" value="ECO:0007005"/>
    <property type="project" value="BHF-UCL"/>
</dbReference>
<dbReference type="GO" id="GO:0031012">
    <property type="term" value="C:extracellular matrix"/>
    <property type="evidence" value="ECO:0000314"/>
    <property type="project" value="MGI"/>
</dbReference>
<dbReference type="GO" id="GO:0005576">
    <property type="term" value="C:extracellular region"/>
    <property type="evidence" value="ECO:0000250"/>
    <property type="project" value="UniProtKB"/>
</dbReference>
<dbReference type="GO" id="GO:0033165">
    <property type="term" value="C:interphotoreceptor matrix"/>
    <property type="evidence" value="ECO:0007669"/>
    <property type="project" value="UniProtKB-SubCell"/>
</dbReference>
<dbReference type="GO" id="GO:0001750">
    <property type="term" value="C:photoreceptor outer segment"/>
    <property type="evidence" value="ECO:0007669"/>
    <property type="project" value="UniProtKB-SubCell"/>
</dbReference>
<dbReference type="GO" id="GO:0005509">
    <property type="term" value="F:calcium ion binding"/>
    <property type="evidence" value="ECO:0007669"/>
    <property type="project" value="InterPro"/>
</dbReference>
<dbReference type="GO" id="GO:0030246">
    <property type="term" value="F:carbohydrate binding"/>
    <property type="evidence" value="ECO:0007669"/>
    <property type="project" value="UniProtKB-KW"/>
</dbReference>
<dbReference type="GO" id="GO:0005540">
    <property type="term" value="F:hyaluronic acid binding"/>
    <property type="evidence" value="ECO:0007669"/>
    <property type="project" value="UniProtKB-KW"/>
</dbReference>
<dbReference type="GO" id="GO:0019903">
    <property type="term" value="F:protein phosphatase binding"/>
    <property type="evidence" value="ECO:0000353"/>
    <property type="project" value="MGI"/>
</dbReference>
<dbReference type="GO" id="GO:0007155">
    <property type="term" value="P:cell adhesion"/>
    <property type="evidence" value="ECO:0007669"/>
    <property type="project" value="InterPro"/>
</dbReference>
<dbReference type="GO" id="GO:0007507">
    <property type="term" value="P:heart development"/>
    <property type="evidence" value="ECO:0000315"/>
    <property type="project" value="MGI"/>
</dbReference>
<dbReference type="GO" id="GO:0001657">
    <property type="term" value="P:ureteric bud development"/>
    <property type="evidence" value="ECO:0000270"/>
    <property type="project" value="UniProtKB"/>
</dbReference>
<dbReference type="CDD" id="cd00033">
    <property type="entry name" value="CCP"/>
    <property type="match status" value="1"/>
</dbReference>
<dbReference type="CDD" id="cd03588">
    <property type="entry name" value="CLECT_CSPGs"/>
    <property type="match status" value="1"/>
</dbReference>
<dbReference type="CDD" id="cd00054">
    <property type="entry name" value="EGF_CA"/>
    <property type="match status" value="2"/>
</dbReference>
<dbReference type="CDD" id="cd05901">
    <property type="entry name" value="Ig_Versican"/>
    <property type="match status" value="1"/>
</dbReference>
<dbReference type="CDD" id="cd03517">
    <property type="entry name" value="Link_domain_CSPGs_modules_1_3"/>
    <property type="match status" value="1"/>
</dbReference>
<dbReference type="CDD" id="cd03520">
    <property type="entry name" value="Link_domain_CSPGs_modules_2_4"/>
    <property type="match status" value="1"/>
</dbReference>
<dbReference type="FunFam" id="3.10.100.10:FF:000011">
    <property type="entry name" value="Aggrecan core protein"/>
    <property type="match status" value="1"/>
</dbReference>
<dbReference type="FunFam" id="3.10.100.10:FF:000002">
    <property type="entry name" value="Hyaluronan proteoglycan link protein 1"/>
    <property type="match status" value="1"/>
</dbReference>
<dbReference type="FunFam" id="2.10.70.10:FF:000003">
    <property type="entry name" value="Versican core protein"/>
    <property type="match status" value="1"/>
</dbReference>
<dbReference type="FunFam" id="3.10.100.10:FF:000003">
    <property type="entry name" value="Versican core protein"/>
    <property type="match status" value="1"/>
</dbReference>
<dbReference type="FunFam" id="2.10.25.10:FF:000527">
    <property type="entry name" value="versican core protein isoform X2"/>
    <property type="match status" value="1"/>
</dbReference>
<dbReference type="FunFam" id="2.60.40.10:FF:000361">
    <property type="entry name" value="versican core protein-like"/>
    <property type="match status" value="1"/>
</dbReference>
<dbReference type="FunFam" id="2.10.25.10:FF:000006">
    <property type="entry name" value="Versican core protein-like isoform 1"/>
    <property type="match status" value="1"/>
</dbReference>
<dbReference type="Gene3D" id="2.10.70.10">
    <property type="entry name" value="Complement Module, domain 1"/>
    <property type="match status" value="1"/>
</dbReference>
<dbReference type="Gene3D" id="2.60.40.10">
    <property type="entry name" value="Immunoglobulins"/>
    <property type="match status" value="1"/>
</dbReference>
<dbReference type="Gene3D" id="2.10.25.10">
    <property type="entry name" value="Laminin"/>
    <property type="match status" value="2"/>
</dbReference>
<dbReference type="Gene3D" id="3.10.100.10">
    <property type="entry name" value="Mannose-Binding Protein A, subunit A"/>
    <property type="match status" value="3"/>
</dbReference>
<dbReference type="InterPro" id="IPR001304">
    <property type="entry name" value="C-type_lectin-like"/>
</dbReference>
<dbReference type="InterPro" id="IPR016186">
    <property type="entry name" value="C-type_lectin-like/link_sf"/>
</dbReference>
<dbReference type="InterPro" id="IPR018378">
    <property type="entry name" value="C-type_lectin_CS"/>
</dbReference>
<dbReference type="InterPro" id="IPR033987">
    <property type="entry name" value="CSPG_CTLD"/>
</dbReference>
<dbReference type="InterPro" id="IPR016187">
    <property type="entry name" value="CTDL_fold"/>
</dbReference>
<dbReference type="InterPro" id="IPR001881">
    <property type="entry name" value="EGF-like_Ca-bd_dom"/>
</dbReference>
<dbReference type="InterPro" id="IPR000742">
    <property type="entry name" value="EGF-like_dom"/>
</dbReference>
<dbReference type="InterPro" id="IPR000152">
    <property type="entry name" value="EGF-type_Asp/Asn_hydroxyl_site"/>
</dbReference>
<dbReference type="InterPro" id="IPR018097">
    <property type="entry name" value="EGF_Ca-bd_CS"/>
</dbReference>
<dbReference type="InterPro" id="IPR050691">
    <property type="entry name" value="Hyaluronan_bind_Proteoglycan"/>
</dbReference>
<dbReference type="InterPro" id="IPR007110">
    <property type="entry name" value="Ig-like_dom"/>
</dbReference>
<dbReference type="InterPro" id="IPR036179">
    <property type="entry name" value="Ig-like_dom_sf"/>
</dbReference>
<dbReference type="InterPro" id="IPR013783">
    <property type="entry name" value="Ig-like_fold"/>
</dbReference>
<dbReference type="InterPro" id="IPR003599">
    <property type="entry name" value="Ig_sub"/>
</dbReference>
<dbReference type="InterPro" id="IPR013106">
    <property type="entry name" value="Ig_V-set"/>
</dbReference>
<dbReference type="InterPro" id="IPR000538">
    <property type="entry name" value="Link_dom"/>
</dbReference>
<dbReference type="InterPro" id="IPR035976">
    <property type="entry name" value="Sushi/SCR/CCP_sf"/>
</dbReference>
<dbReference type="InterPro" id="IPR000436">
    <property type="entry name" value="Sushi_SCR_CCP_dom"/>
</dbReference>
<dbReference type="PANTHER" id="PTHR22804">
    <property type="entry name" value="AGGRECAN/VERSICAN PROTEOGLYCAN"/>
    <property type="match status" value="1"/>
</dbReference>
<dbReference type="PANTHER" id="PTHR22804:SF6">
    <property type="entry name" value="VERSICAN CORE PROTEIN"/>
    <property type="match status" value="1"/>
</dbReference>
<dbReference type="Pfam" id="PF00008">
    <property type="entry name" value="EGF"/>
    <property type="match status" value="2"/>
</dbReference>
<dbReference type="Pfam" id="PF00059">
    <property type="entry name" value="Lectin_C"/>
    <property type="match status" value="1"/>
</dbReference>
<dbReference type="Pfam" id="PF00084">
    <property type="entry name" value="Sushi"/>
    <property type="match status" value="1"/>
</dbReference>
<dbReference type="Pfam" id="PF07686">
    <property type="entry name" value="V-set"/>
    <property type="match status" value="1"/>
</dbReference>
<dbReference type="Pfam" id="PF00193">
    <property type="entry name" value="Xlink"/>
    <property type="match status" value="2"/>
</dbReference>
<dbReference type="PRINTS" id="PR01265">
    <property type="entry name" value="LINKMODULE"/>
</dbReference>
<dbReference type="SMART" id="SM00032">
    <property type="entry name" value="CCP"/>
    <property type="match status" value="1"/>
</dbReference>
<dbReference type="SMART" id="SM00034">
    <property type="entry name" value="CLECT"/>
    <property type="match status" value="1"/>
</dbReference>
<dbReference type="SMART" id="SM00181">
    <property type="entry name" value="EGF"/>
    <property type="match status" value="2"/>
</dbReference>
<dbReference type="SMART" id="SM00179">
    <property type="entry name" value="EGF_CA"/>
    <property type="match status" value="2"/>
</dbReference>
<dbReference type="SMART" id="SM00409">
    <property type="entry name" value="IG"/>
    <property type="match status" value="1"/>
</dbReference>
<dbReference type="SMART" id="SM00406">
    <property type="entry name" value="IGv"/>
    <property type="match status" value="1"/>
</dbReference>
<dbReference type="SMART" id="SM00445">
    <property type="entry name" value="LINK"/>
    <property type="match status" value="2"/>
</dbReference>
<dbReference type="SUPFAM" id="SSF56436">
    <property type="entry name" value="C-type lectin-like"/>
    <property type="match status" value="3"/>
</dbReference>
<dbReference type="SUPFAM" id="SSF57535">
    <property type="entry name" value="Complement control module/SCR domain"/>
    <property type="match status" value="1"/>
</dbReference>
<dbReference type="SUPFAM" id="SSF57196">
    <property type="entry name" value="EGF/Laminin"/>
    <property type="match status" value="1"/>
</dbReference>
<dbReference type="SUPFAM" id="SSF48726">
    <property type="entry name" value="Immunoglobulin"/>
    <property type="match status" value="1"/>
</dbReference>
<dbReference type="PROSITE" id="PS00010">
    <property type="entry name" value="ASX_HYDROXYL"/>
    <property type="match status" value="1"/>
</dbReference>
<dbReference type="PROSITE" id="PS00615">
    <property type="entry name" value="C_TYPE_LECTIN_1"/>
    <property type="match status" value="1"/>
</dbReference>
<dbReference type="PROSITE" id="PS50041">
    <property type="entry name" value="C_TYPE_LECTIN_2"/>
    <property type="match status" value="1"/>
</dbReference>
<dbReference type="PROSITE" id="PS00022">
    <property type="entry name" value="EGF_1"/>
    <property type="match status" value="2"/>
</dbReference>
<dbReference type="PROSITE" id="PS01186">
    <property type="entry name" value="EGF_2"/>
    <property type="match status" value="1"/>
</dbReference>
<dbReference type="PROSITE" id="PS50026">
    <property type="entry name" value="EGF_3"/>
    <property type="match status" value="2"/>
</dbReference>
<dbReference type="PROSITE" id="PS01187">
    <property type="entry name" value="EGF_CA"/>
    <property type="match status" value="1"/>
</dbReference>
<dbReference type="PROSITE" id="PS50835">
    <property type="entry name" value="IG_LIKE"/>
    <property type="match status" value="1"/>
</dbReference>
<dbReference type="PROSITE" id="PS01241">
    <property type="entry name" value="LINK_1"/>
    <property type="match status" value="2"/>
</dbReference>
<dbReference type="PROSITE" id="PS50963">
    <property type="entry name" value="LINK_2"/>
    <property type="match status" value="2"/>
</dbReference>
<dbReference type="PROSITE" id="PS50923">
    <property type="entry name" value="SUSHI"/>
    <property type="match status" value="1"/>
</dbReference>
<gene>
    <name type="primary">Vcan</name>
    <name type="synonym">Cspg2</name>
</gene>
<reference key="1">
    <citation type="journal article" date="1995" name="J. Biol. Chem.">
        <title>Multiple forms of mouse PG-M, a large chondroitin sulfate proteoglycan generated by alternative splicing.</title>
        <authorList>
            <person name="Ito K."/>
            <person name="Shinomura T."/>
            <person name="Zako M."/>
            <person name="Ujita M."/>
            <person name="Kimata K."/>
        </authorList>
    </citation>
    <scope>NUCLEOTIDE SEQUENCE [MRNA] (ISOFORMS V0; V1 AND V2)</scope>
    <scope>TISSUE SPECIFICITY</scope>
    <source>
        <strain>C57BL/6J</strain>
        <strain>Swiss Webster</strain>
        <tissue>Brain</tissue>
        <tissue>Endothelial cell</tissue>
    </source>
</reference>
<reference key="2">
    <citation type="journal article" date="1995" name="J. Biol. Chem.">
        <title>Expression of PG-M(V3), an alternatively spliced form of PG-M without a chondroitin sulfate attachment in region in mouse and human tissues.</title>
        <authorList>
            <person name="Zako M."/>
            <person name="Shinomura T."/>
            <person name="Ujita M."/>
            <person name="Ito K."/>
            <person name="Kimata K."/>
        </authorList>
    </citation>
    <scope>NUCLEOTIDE SEQUENCE [MRNA] (ISOFORM V3)</scope>
    <source>
        <strain>C57BL/6J</strain>
        <tissue>Endothelial cell</tissue>
    </source>
</reference>
<reference key="3">
    <citation type="journal article" date="2005" name="Science">
        <title>The transcriptional landscape of the mammalian genome.</title>
        <authorList>
            <person name="Carninci P."/>
            <person name="Kasukawa T."/>
            <person name="Katayama S."/>
            <person name="Gough J."/>
            <person name="Frith M.C."/>
            <person name="Maeda N."/>
            <person name="Oyama R."/>
            <person name="Ravasi T."/>
            <person name="Lenhard B."/>
            <person name="Wells C."/>
            <person name="Kodzius R."/>
            <person name="Shimokawa K."/>
            <person name="Bajic V.B."/>
            <person name="Brenner S.E."/>
            <person name="Batalov S."/>
            <person name="Forrest A.R."/>
            <person name="Zavolan M."/>
            <person name="Davis M.J."/>
            <person name="Wilming L.G."/>
            <person name="Aidinis V."/>
            <person name="Allen J.E."/>
            <person name="Ambesi-Impiombato A."/>
            <person name="Apweiler R."/>
            <person name="Aturaliya R.N."/>
            <person name="Bailey T.L."/>
            <person name="Bansal M."/>
            <person name="Baxter L."/>
            <person name="Beisel K.W."/>
            <person name="Bersano T."/>
            <person name="Bono H."/>
            <person name="Chalk A.M."/>
            <person name="Chiu K.P."/>
            <person name="Choudhary V."/>
            <person name="Christoffels A."/>
            <person name="Clutterbuck D.R."/>
            <person name="Crowe M.L."/>
            <person name="Dalla E."/>
            <person name="Dalrymple B.P."/>
            <person name="de Bono B."/>
            <person name="Della Gatta G."/>
            <person name="di Bernardo D."/>
            <person name="Down T."/>
            <person name="Engstrom P."/>
            <person name="Fagiolini M."/>
            <person name="Faulkner G."/>
            <person name="Fletcher C.F."/>
            <person name="Fukushima T."/>
            <person name="Furuno M."/>
            <person name="Futaki S."/>
            <person name="Gariboldi M."/>
            <person name="Georgii-Hemming P."/>
            <person name="Gingeras T.R."/>
            <person name="Gojobori T."/>
            <person name="Green R.E."/>
            <person name="Gustincich S."/>
            <person name="Harbers M."/>
            <person name="Hayashi Y."/>
            <person name="Hensch T.K."/>
            <person name="Hirokawa N."/>
            <person name="Hill D."/>
            <person name="Huminiecki L."/>
            <person name="Iacono M."/>
            <person name="Ikeo K."/>
            <person name="Iwama A."/>
            <person name="Ishikawa T."/>
            <person name="Jakt M."/>
            <person name="Kanapin A."/>
            <person name="Katoh M."/>
            <person name="Kawasawa Y."/>
            <person name="Kelso J."/>
            <person name="Kitamura H."/>
            <person name="Kitano H."/>
            <person name="Kollias G."/>
            <person name="Krishnan S.P."/>
            <person name="Kruger A."/>
            <person name="Kummerfeld S.K."/>
            <person name="Kurochkin I.V."/>
            <person name="Lareau L.F."/>
            <person name="Lazarevic D."/>
            <person name="Lipovich L."/>
            <person name="Liu J."/>
            <person name="Liuni S."/>
            <person name="McWilliam S."/>
            <person name="Madan Babu M."/>
            <person name="Madera M."/>
            <person name="Marchionni L."/>
            <person name="Matsuda H."/>
            <person name="Matsuzawa S."/>
            <person name="Miki H."/>
            <person name="Mignone F."/>
            <person name="Miyake S."/>
            <person name="Morris K."/>
            <person name="Mottagui-Tabar S."/>
            <person name="Mulder N."/>
            <person name="Nakano N."/>
            <person name="Nakauchi H."/>
            <person name="Ng P."/>
            <person name="Nilsson R."/>
            <person name="Nishiguchi S."/>
            <person name="Nishikawa S."/>
            <person name="Nori F."/>
            <person name="Ohara O."/>
            <person name="Okazaki Y."/>
            <person name="Orlando V."/>
            <person name="Pang K.C."/>
            <person name="Pavan W.J."/>
            <person name="Pavesi G."/>
            <person name="Pesole G."/>
            <person name="Petrovsky N."/>
            <person name="Piazza S."/>
            <person name="Reed J."/>
            <person name="Reid J.F."/>
            <person name="Ring B.Z."/>
            <person name="Ringwald M."/>
            <person name="Rost B."/>
            <person name="Ruan Y."/>
            <person name="Salzberg S.L."/>
            <person name="Sandelin A."/>
            <person name="Schneider C."/>
            <person name="Schoenbach C."/>
            <person name="Sekiguchi K."/>
            <person name="Semple C.A."/>
            <person name="Seno S."/>
            <person name="Sessa L."/>
            <person name="Sheng Y."/>
            <person name="Shibata Y."/>
            <person name="Shimada H."/>
            <person name="Shimada K."/>
            <person name="Silva D."/>
            <person name="Sinclair B."/>
            <person name="Sperling S."/>
            <person name="Stupka E."/>
            <person name="Sugiura K."/>
            <person name="Sultana R."/>
            <person name="Takenaka Y."/>
            <person name="Taki K."/>
            <person name="Tammoja K."/>
            <person name="Tan S.L."/>
            <person name="Tang S."/>
            <person name="Taylor M.S."/>
            <person name="Tegner J."/>
            <person name="Teichmann S.A."/>
            <person name="Ueda H.R."/>
            <person name="van Nimwegen E."/>
            <person name="Verardo R."/>
            <person name="Wei C.L."/>
            <person name="Yagi K."/>
            <person name="Yamanishi H."/>
            <person name="Zabarovsky E."/>
            <person name="Zhu S."/>
            <person name="Zimmer A."/>
            <person name="Hide W."/>
            <person name="Bult C."/>
            <person name="Grimmond S.M."/>
            <person name="Teasdale R.D."/>
            <person name="Liu E.T."/>
            <person name="Brusic V."/>
            <person name="Quackenbush J."/>
            <person name="Wahlestedt C."/>
            <person name="Mattick J.S."/>
            <person name="Hume D.A."/>
            <person name="Kai C."/>
            <person name="Sasaki D."/>
            <person name="Tomaru Y."/>
            <person name="Fukuda S."/>
            <person name="Kanamori-Katayama M."/>
            <person name="Suzuki M."/>
            <person name="Aoki J."/>
            <person name="Arakawa T."/>
            <person name="Iida J."/>
            <person name="Imamura K."/>
            <person name="Itoh M."/>
            <person name="Kato T."/>
            <person name="Kawaji H."/>
            <person name="Kawagashira N."/>
            <person name="Kawashima T."/>
            <person name="Kojima M."/>
            <person name="Kondo S."/>
            <person name="Konno H."/>
            <person name="Nakano K."/>
            <person name="Ninomiya N."/>
            <person name="Nishio T."/>
            <person name="Okada M."/>
            <person name="Plessy C."/>
            <person name="Shibata K."/>
            <person name="Shiraki T."/>
            <person name="Suzuki S."/>
            <person name="Tagami M."/>
            <person name="Waki K."/>
            <person name="Watahiki A."/>
            <person name="Okamura-Oho Y."/>
            <person name="Suzuki H."/>
            <person name="Kawai J."/>
            <person name="Hayashizaki Y."/>
        </authorList>
    </citation>
    <scope>NUCLEOTIDE SEQUENCE [LARGE SCALE MRNA] OF 1-1691 (ISOFORM V1)</scope>
    <source>
        <strain>C57BL/6J</strain>
        <tissue>Skin</tissue>
    </source>
</reference>
<reference key="4">
    <citation type="submission" date="2009-01" db="UniProtKB">
        <authorList>
            <person name="Lubec G."/>
            <person name="Sunyer B."/>
            <person name="Chen W.-Q."/>
        </authorList>
    </citation>
    <scope>PROTEIN SEQUENCE OF 277-288</scope>
    <scope>IDENTIFICATION BY MASS SPECTROMETRY</scope>
    <source>
        <strain>OF1</strain>
        <tissue>Hippocampus</tissue>
    </source>
</reference>
<reference key="5">
    <citation type="journal article" date="1999" name="J. Biol. Chem.">
        <title>Fibulin-1 is a ligand for the C-type lectin domains of aggrecan and versican.</title>
        <authorList>
            <person name="Aspberg A."/>
            <person name="Adam S."/>
            <person name="Kostka G."/>
            <person name="Timpl R."/>
            <person name="Heinegaard D."/>
        </authorList>
    </citation>
    <scope>INTERACTION WITH FBLN1</scope>
</reference>
<reference key="6">
    <citation type="journal article" date="2007" name="Proc. Natl. Acad. Sci. U.S.A.">
        <title>Large-scale phosphorylation analysis of mouse liver.</title>
        <authorList>
            <person name="Villen J."/>
            <person name="Beausoleil S.A."/>
            <person name="Gerber S.A."/>
            <person name="Gygi S.P."/>
        </authorList>
    </citation>
    <scope>IDENTIFICATION BY MASS SPECTROMETRY [LARGE SCALE ANALYSIS]</scope>
    <source>
        <tissue>Liver</tissue>
    </source>
</reference>
<reference key="7">
    <citation type="journal article" date="2010" name="Cell">
        <title>A tissue-specific atlas of mouse protein phosphorylation and expression.</title>
        <authorList>
            <person name="Huttlin E.L."/>
            <person name="Jedrychowski M.P."/>
            <person name="Elias J.E."/>
            <person name="Goswami T."/>
            <person name="Rad R."/>
            <person name="Beausoleil S.A."/>
            <person name="Villen J."/>
            <person name="Haas W."/>
            <person name="Sowa M.E."/>
            <person name="Gygi S.P."/>
        </authorList>
    </citation>
    <scope>PHOSPHORYLATION [LARGE SCALE ANALYSIS] AT SER-2585 AND SER-2586</scope>
    <scope>IDENTIFICATION BY MASS SPECTROMETRY [LARGE SCALE ANALYSIS]</scope>
    <source>
        <tissue>Brain</tissue>
        <tissue>Brown adipose tissue</tissue>
        <tissue>Heart</tissue>
        <tissue>Kidney</tissue>
        <tissue>Lung</tissue>
        <tissue>Spleen</tissue>
    </source>
</reference>
<reference key="8">
    <citation type="journal article" date="2013" name="J. Biol. Chem.">
        <title>Versican processing by a disintegrin-like and metalloproteinase domain with thrombospondin-1 repeats proteinases-5 and -15 facilitates myoblast fusion.</title>
        <authorList>
            <person name="Stupka N."/>
            <person name="Kintakas C."/>
            <person name="White J.D."/>
            <person name="Fraser F.W."/>
            <person name="Hanciu M."/>
            <person name="Aramaki-Hattori N."/>
            <person name="Martin S."/>
            <person name="Coles C."/>
            <person name="Collier F."/>
            <person name="Ward A.C."/>
            <person name="Apte S.S."/>
            <person name="McCulloch D.R."/>
        </authorList>
    </citation>
    <scope>DEVELOPMENTAL STAGE</scope>
    <scope>CLEAVAGE BY ADAMTS5</scope>
</reference>
<reference key="9">
    <citation type="journal article" date="2013" name="J. Biol. Chem.">
        <title>Biosynthesis and expression of a disintegrin-like and metalloproteinase domain with thrombospondin-1 repeats-15: a novel versican-cleaving proteoglycanase.</title>
        <authorList>
            <person name="Dancevic C.M."/>
            <person name="Fraser F.W."/>
            <person name="Smith A.D."/>
            <person name="Stupka N."/>
            <person name="Ward A.C."/>
            <person name="McCulloch D.R."/>
        </authorList>
    </citation>
    <scope>CLEAVAGE BY ADAMTS15</scope>
</reference>
<reference key="10">
    <citation type="journal article" date="2018" name="Acta Biomater.">
        <title>Extracellular matrix component expression in human pluripotent stem cell-derived retinal organoids recapitulates retinogenesis in vivo and reveals an important role for IMPG1 and CD44 in the development of photoreceptors and interphotoreceptor matrix.</title>
        <authorList>
            <person name="Felemban M."/>
            <person name="Dorgau B."/>
            <person name="Hunt N.C."/>
            <person name="Hallam D."/>
            <person name="Zerti D."/>
            <person name="Bauer R."/>
            <person name="Ding Y."/>
            <person name="Collin J."/>
            <person name="Steel D."/>
            <person name="Krasnogor N."/>
            <person name="Al-Aama J."/>
            <person name="Lindsay S."/>
            <person name="Mellough C."/>
            <person name="Lako M."/>
        </authorList>
    </citation>
    <scope>SUBCELLULAR LOCATION</scope>
    <scope>TISSUE SPECIFICITY</scope>
</reference>
<evidence type="ECO:0000250" key="1"/>
<evidence type="ECO:0000250" key="2">
    <source>
        <dbReference type="UniProtKB" id="P13611"/>
    </source>
</evidence>
<evidence type="ECO:0000255" key="3"/>
<evidence type="ECO:0000255" key="4">
    <source>
        <dbReference type="PROSITE-ProRule" id="PRU00040"/>
    </source>
</evidence>
<evidence type="ECO:0000255" key="5">
    <source>
        <dbReference type="PROSITE-ProRule" id="PRU00076"/>
    </source>
</evidence>
<evidence type="ECO:0000255" key="6">
    <source>
        <dbReference type="PROSITE-ProRule" id="PRU00302"/>
    </source>
</evidence>
<evidence type="ECO:0000255" key="7">
    <source>
        <dbReference type="PROSITE-ProRule" id="PRU00323"/>
    </source>
</evidence>
<evidence type="ECO:0000256" key="8">
    <source>
        <dbReference type="SAM" id="MobiDB-lite"/>
    </source>
</evidence>
<evidence type="ECO:0000269" key="9">
    <source>
    </source>
</evidence>
<evidence type="ECO:0000269" key="10">
    <source>
    </source>
</evidence>
<evidence type="ECO:0000269" key="11">
    <source>
    </source>
</evidence>
<evidence type="ECO:0000269" key="12">
    <source>
    </source>
</evidence>
<evidence type="ECO:0000269" key="13">
    <source>
    </source>
</evidence>
<evidence type="ECO:0000303" key="14">
    <source>
    </source>
</evidence>
<evidence type="ECO:0000303" key="15">
    <source>
    </source>
</evidence>
<evidence type="ECO:0000303" key="16">
    <source>
    </source>
</evidence>
<evidence type="ECO:0000305" key="17"/>
<evidence type="ECO:0007744" key="18">
    <source>
    </source>
</evidence>
<keyword id="KW-0025">Alternative splicing</keyword>
<keyword id="KW-0106">Calcium</keyword>
<keyword id="KW-0966">Cell projection</keyword>
<keyword id="KW-0903">Direct protein sequencing</keyword>
<keyword id="KW-1015">Disulfide bond</keyword>
<keyword id="KW-0245">EGF-like domain</keyword>
<keyword id="KW-0272">Extracellular matrix</keyword>
<keyword id="KW-0325">Glycoprotein</keyword>
<keyword id="KW-0373">Hyaluronic acid</keyword>
<keyword id="KW-0393">Immunoglobulin domain</keyword>
<keyword id="KW-0430">Lectin</keyword>
<keyword id="KW-0597">Phosphoprotein</keyword>
<keyword id="KW-0654">Proteoglycan</keyword>
<keyword id="KW-1185">Reference proteome</keyword>
<keyword id="KW-0677">Repeat</keyword>
<keyword id="KW-0964">Secreted</keyword>
<keyword id="KW-0732">Signal</keyword>
<keyword id="KW-0768">Sushi</keyword>
<comment type="function">
    <text>May play a role in intercellular signaling and in connecting cells with the extracellular matrix. May take part in the regulation of cell motility, growth and differentiation. Binds hyaluronic acid.</text>
</comment>
<comment type="subunit">
    <text evidence="9">Interacts with FBLN1.</text>
</comment>
<comment type="subcellular location">
    <subcellularLocation>
        <location evidence="2">Secreted</location>
        <location evidence="2">Extracellular space</location>
        <location evidence="2">Extracellular matrix</location>
    </subcellularLocation>
    <subcellularLocation>
        <location evidence="12">Cell projection</location>
        <location evidence="12">Cilium</location>
        <location evidence="12">Photoreceptor outer segment</location>
    </subcellularLocation>
    <subcellularLocation>
        <location evidence="12">Secreted</location>
        <location evidence="12">Extracellular space</location>
        <location evidence="12">Extracellular matrix</location>
        <location evidence="12">Interphotoreceptor matrix</location>
    </subcellularLocation>
    <subcellularLocation>
        <location evidence="2">Secreted</location>
    </subcellularLocation>
</comment>
<comment type="alternative products">
    <event type="alternative splicing"/>
    <isoform>
        <id>Q62059-1</id>
        <name>V0</name>
        <sequence type="displayed"/>
    </isoform>
    <isoform>
        <id>Q62059-2</id>
        <name>V1</name>
        <sequence type="described" ref="VSP_003087 VSP_003088"/>
    </isoform>
    <isoform>
        <id>Q62059-3</id>
        <name>V2</name>
        <sequence type="described" ref="VSP_003089"/>
    </isoform>
    <isoform>
        <id>Q62059-4</id>
        <name>V3</name>
        <sequence type="described" ref="VSP_003087 VSP_003090"/>
    </isoform>
    <text>Additional isoforms seem to exist.</text>
</comment>
<comment type="tissue specificity">
    <text evidence="12 13">Expressed in the retina (at protein level) (PubMed:29777959). Isoform V2: Only expressed in brain (PubMed:7822336).</text>
</comment>
<comment type="developmental stage">
    <text evidence="10">In embryonic skeletal muscle, significantly up-regulated from 12.5 dpc to 15.5 dpc (PubMed:23233679). Decreased levels in postnatal skeletal muscle (PubMed:23233679). In myoblasts, dramatically up-regulated when myoblasts reach confluence and contact inhibition, remaining high throughout the differentiation process (PubMed:23233679). Disappears after the cartilage development.</text>
</comment>
<comment type="PTM">
    <text evidence="2">Phosphorylated by FAM20C in the extracellular medium.</text>
</comment>
<comment type="PTM">
    <text evidence="10 11">Proteolytically cleaved by ADAMTS5 and ADAMTS15 in the pericellular matrix surrounding myoblasts, facilitating myoblast contact and fusion which is required for skeletal muscle development and regeneration.</text>
</comment>
<comment type="similarity">
    <text evidence="17">Belongs to the aggrecan/versican proteoglycan family.</text>
</comment>
<comment type="online information" name="Functional Glycomics Gateway - Glycan Binding">
    <link uri="http://www.functionalglycomics.org/glycomics/GBPServlet?&amp;operationType=view&amp;cbpId=cbp_mou_Ctlect_157"/>
    <text>Versican</text>
</comment>
<accession>Q62059</accession>
<accession>Q62058</accession>
<accession>Q9CUU0</accession>
<organism>
    <name type="scientific">Mus musculus</name>
    <name type="common">Mouse</name>
    <dbReference type="NCBI Taxonomy" id="10090"/>
    <lineage>
        <taxon>Eukaryota</taxon>
        <taxon>Metazoa</taxon>
        <taxon>Chordata</taxon>
        <taxon>Craniata</taxon>
        <taxon>Vertebrata</taxon>
        <taxon>Euteleostomi</taxon>
        <taxon>Mammalia</taxon>
        <taxon>Eutheria</taxon>
        <taxon>Euarchontoglires</taxon>
        <taxon>Glires</taxon>
        <taxon>Rodentia</taxon>
        <taxon>Myomorpha</taxon>
        <taxon>Muroidea</taxon>
        <taxon>Muridae</taxon>
        <taxon>Murinae</taxon>
        <taxon>Mus</taxon>
        <taxon>Mus</taxon>
    </lineage>
</organism>
<sequence>MLINMKGILWMCSTLLLTHALHQAKMETSPPVKGSLSGKVVLPCHFSTLPTLPPNYNTSEFLRIKWSKMEVDKNGKDIKETTVLVAQNGNIKIGQDYKGRVSVPTHPDDVGDASLTMVKLRASDAAVYRCDVMYGIEDTQDTMSLAVDGVVFHYRAATSRYTLNFAAAQQACLDIGAVIASPEQLFAAYEDGFEQCDAGWLSDQTVRYPIRAPREGCYGDMMGKEGVRTYGFRSPQETYDVYCYVDHLDGDVFHITAPSKFTFEEAEAECTSRDARLATVGELQAAWRNGFDQCDYGWLSDASVRHPVTVARAQCGGGLLGVRTLYRFENQTCFPLPDSRFDAYCFKPKQNISEATTIEMNILAETSSPSLSKEPHMVPDRATPVIPLATELPIFTTHFPPAGNIVNSEQKSVVYSQAITGRLATESPTTTRNTINSWDLNDSLASGSGPLGMPDISEIKEEELRSTTVISQHATGSQAVITEDTQTHESVSQIEQIEVGPLVTSMEITNHISLKELPEKNKTPYESTEVTLEHTTEMPTVSASPELATTSHYGFTLREDDREDRTLTVRSDQSTRVFSQIPEVITVSKTSEDTTYSQLGDLESISTSTITMLGTDRSLIDKEKEPKTNGKVTEDEFGQSQPTTTFPSQHLTEVELLPYSGDTTSVEGISTVIYPSLQTDVTQGRERTETPRPELKKDPYTVDEIPEKVTKDPFIGKTEEVFSGMPLSTSSSESSVERTESVSPALTIEKLTGKPTEARDVEEMTTLTRLETDVTKSDKDVTRVHLTHSTLNVEVVTVSKWPGDEDNSTSKPLPSTEHAGFTKLPPVPLSTIGINGKDKEIPSFTDGGGEYTLFPDGTPKPLEKVSEEDLASGELTVTFHTSTSIGSAEKSASGEPTTGDRFLPTTSTEDQVINATAEGSALGEDTEASKPLFTGPPFVHTSDVEELAFVNYSSTQEPTTYVDISHTSPLSIIPKTEWSVLETSVPLEDEILGKSDQDILEQTHLEATMSPGALRTTGVSQGETQEEPQTPGSPFPTFSSTAVMAKETTAFEEGEGSTYTPSEGRLMTGSERVPGLETTPVGTSYPPGAITDQEVEMDTMVTLMSTIRPTVVSSTESEVIYEAEGSSPTEFASTLRPFQTHVTQLMEETTEEGKKASLDYTDLGSGLFEPRATELPKFPSTPSDISVFTAIDSLHRTPPLSPSSSFTEEQRVFEEESSEKTTGDILPGESVTQHPVTTLIDIVAMKTESDIDHMTSKPPVTQPTRPSVVERKTTSKTQELSTSTPAAGTKFHPDINVYIIEVRENKTGRLSDMIVSGHPIDSESKEEEPCSEETDPLHDLFAEILPELPDSFEIDIYHSEEDEDGEEDCVNATDVTTTPSVQYINGKQLVTTVPKDPEAAEARRGQYESVAPSQNFPDSSATDTHQFILAETESSTTMQFKKSKEGTELLEITWKPETYPETPDHVSSGEPDVFPTLSSHDGKTTRWSESITESSPNLENPVHKQPKPVPLFPEESSGEGAIEQASQETILSRATEVALGKETDQSPTLSTSSILSSSVSVNVLEEEPLTLTGISQTDESMSTIESWVEITPSQTVKFSESSSAPIIEGSGEVEENKNKIFNMVTDLPQRDPTDTLSPLDMSKIMITNHHIYIPATIAPLDSKLPSPDARPTTVWNSNSTSEWVSDKSFEGRKKKENEDEEGAVNAAHQGEVRAATERSDHLLLTPELESSNVDASSDLATWEGFILETTPTESEKEMANSTPVFRETIGVANVEAQPFEHSSSSHPRVQEELTTLSGNPPSLFTDLGSGDASTGMELITASLFTLDLESETKVKKELPSTPSPSVEISSSFEPTGLTPSTVLDIEIAGVMSQTSQKTLISEISGKPTSQSGVRDLYTGFPMGEDFSGDFSEYPTVSYPTMKEETVGMGGSDDERVRDTQTSSSIPTTSDNIYPVPDSKGPDSTVASTTAFPWEEVMSSAEGSGEQLASVRSSVGPVLPLAVDIFSGTESPYFDEEFEEVAAVTEANERPTVLPTAASGNTVDLTENGYIEVNSTMSLDFPQTMEPSKLWSKPEVNLDKQEIGRETVTKEKAQGQKTFESLHSSFAPEQTILETQSLIETEFQTSDYSMLTTLKTYITNKEVEEEGMSIAHMSTPGPGIKDLESYTTHPEAPGKSHSFSATALVTESGAARSVLMDSSTQEEESIKLFQKGVKLTNKESNADLSFSGLGSGGALPPLPTTSVNLTDMKQIISTLYAETSHMESLGTSILGDKMEDHERMEDVSSNEVRMLISKIGSISQDSTEALDTTLSHTGTEEPTTSTLPFVKLMDLERSPKQDPSGGKRKPKTHRPQTMSGLISNENSSASEAEEGATSPTAFLPQTYSVEMTKHFAPSESQPSDLFNVNSGEGSGEVDTLDLVYTSGTTQASSQGDSMLASHGFLEKHPEVSKTEAGATDVSPTASAMFLHHSEYKSSLYPTSTLPSTEPYKSPSEGIEDGLQDNIQFEGSTLKPSRRKTTESIIIDLDKEDSKDLGLTITESAIVKSLPELTSDKNIIIDIDHTKPVYEYIPGIQTDLDPEIKLESHGSSEESLQVQEKYEGAVTLSPTEESFEGSGDALLAGYTQAIYNESVTPNDGKQAEDISFSFATGIPVSSTETELHTFFPTASTLHIPSKLTTASPEIDKPNIEAISLDDIFESSTLSDGQAIADQSEVISTLGHLEKTQEEYEEKKYGGPSFQPEFFSGVGEVLTDPPAYVSIGSTYLIAQTLTELPNVVRPSDSTHYTEATPEVSSLAELSPQIPSSPFPVYVDNGVSKFPEVPHTSAQPVSTVTSSQKSIESPFKEVHANIEETIKPLGGNVHRTEPPSMSRDPALDVSEDESKHKLLEELETSPTKPETSQDFPNKAKDHIPGETVGMLAGIRTTESEPVITADDMELGGATQQPHSASAAFRVETGMVPQPIQQEPERPTFPSLEINHETHTSLFGESILATSEKQVSQKILDNSNQATVSSTLDLHTAHALSPFSILDNSNETAFLIGISEESVEGTAVYLPGPDLCKTNPCLNGGTCYPTETSYVCTCAPGYSGDQCELDFDECHSNPCRNGATCVDGFNTFRCLCLPSYVGALCEQDTETCDYGWHKFQGQCYKYFAHRRTWDAAERECRLQGAHLTSILSHEEQMFVNRVGHDYQWIGLNDKMFEHDFRWTDGSALQYENWRPNQPDSFFSAGEDCVVIIWHENGQWNDVPCNYHLTYTCKKGTVACGQPPVVENAKTFGKMKPRYEINSLIRYHCKDGFIQRHLPTIRCLGNGRWAMPKITCMNPSAYQRTYSKKYLKNSSSAKDNSINTSKHEHRWSRRQETRR</sequence>
<name>CSPG2_MOUSE</name>
<proteinExistence type="evidence at protein level"/>
<protein>
    <recommendedName>
        <fullName>Versican core protein</fullName>
    </recommendedName>
    <alternativeName>
        <fullName>Chondroitin sulfate proteoglycan core protein 2</fullName>
        <shortName>Chondroitin sulfate proteoglycan 2</shortName>
    </alternativeName>
    <alternativeName>
        <fullName>Large fibroblast proteoglycan</fullName>
    </alternativeName>
    <alternativeName>
        <fullName>PG-M</fullName>
    </alternativeName>
</protein>
<feature type="signal peptide" evidence="3">
    <location>
        <begin position="1"/>
        <end position="23"/>
    </location>
</feature>
<feature type="chain" id="PRO_0000017523" description="Versican core protein">
    <location>
        <begin position="24"/>
        <end position="3357"/>
    </location>
</feature>
<feature type="domain" description="Ig-like V-type">
    <location>
        <begin position="24"/>
        <end position="146"/>
    </location>
</feature>
<feature type="domain" description="Link 1" evidence="7">
    <location>
        <begin position="150"/>
        <end position="245"/>
    </location>
</feature>
<feature type="domain" description="Link 2" evidence="7">
    <location>
        <begin position="251"/>
        <end position="347"/>
    </location>
</feature>
<feature type="domain" description="EGF-like 1" evidence="5">
    <location>
        <begin position="3051"/>
        <end position="3087"/>
    </location>
</feature>
<feature type="domain" description="EGF-like 2; calcium-binding" evidence="5">
    <location>
        <begin position="3089"/>
        <end position="3125"/>
    </location>
</feature>
<feature type="domain" description="C-type lectin" evidence="4">
    <location>
        <begin position="3138"/>
        <end position="3252"/>
    </location>
</feature>
<feature type="domain" description="Sushi" evidence="6">
    <location>
        <begin position="3256"/>
        <end position="3316"/>
    </location>
</feature>
<feature type="region of interest" description="GAG-alpha (glucosaminoglycan attachment domain)">
    <location>
        <begin position="348"/>
        <end position="1308"/>
    </location>
</feature>
<feature type="region of interest" description="Disordered" evidence="8">
    <location>
        <begin position="625"/>
        <end position="646"/>
    </location>
</feature>
<feature type="region of interest" description="Disordered" evidence="8">
    <location>
        <begin position="801"/>
        <end position="863"/>
    </location>
</feature>
<feature type="region of interest" description="Disordered" evidence="8">
    <location>
        <begin position="881"/>
        <end position="908"/>
    </location>
</feature>
<feature type="region of interest" description="Disordered" evidence="8">
    <location>
        <begin position="1010"/>
        <end position="1088"/>
    </location>
</feature>
<feature type="region of interest" description="Disordered" evidence="8">
    <location>
        <begin position="1252"/>
        <end position="1288"/>
    </location>
</feature>
<feature type="region of interest" description="GAG-beta">
    <location>
        <begin position="1309"/>
        <end position="3051"/>
    </location>
</feature>
<feature type="region of interest" description="Disordered" evidence="8">
    <location>
        <begin position="1396"/>
        <end position="1421"/>
    </location>
</feature>
<feature type="region of interest" description="Disordered" evidence="8">
    <location>
        <begin position="1458"/>
        <end position="1524"/>
    </location>
</feature>
<feature type="region of interest" description="Disordered" evidence="8">
    <location>
        <begin position="1664"/>
        <end position="1705"/>
    </location>
</feature>
<feature type="region of interest" description="Disordered" evidence="8">
    <location>
        <begin position="1926"/>
        <end position="1965"/>
    </location>
</feature>
<feature type="region of interest" description="Disordered" evidence="8">
    <location>
        <begin position="2308"/>
        <end position="2374"/>
    </location>
</feature>
<feature type="region of interest" description="Disordered" evidence="8">
    <location>
        <begin position="2475"/>
        <end position="2494"/>
    </location>
</feature>
<feature type="region of interest" description="Disordered" evidence="8">
    <location>
        <begin position="2853"/>
        <end position="2908"/>
    </location>
</feature>
<feature type="region of interest" description="Disordered" evidence="8">
    <location>
        <begin position="3331"/>
        <end position="3357"/>
    </location>
</feature>
<feature type="compositionally biased region" description="Basic and acidic residues" evidence="8">
    <location>
        <begin position="625"/>
        <end position="634"/>
    </location>
</feature>
<feature type="compositionally biased region" description="Polar residues" evidence="8">
    <location>
        <begin position="1017"/>
        <end position="1042"/>
    </location>
</feature>
<feature type="compositionally biased region" description="Polar residues" evidence="8">
    <location>
        <begin position="1275"/>
        <end position="1286"/>
    </location>
</feature>
<feature type="compositionally biased region" description="Basic and acidic residues" evidence="8">
    <location>
        <begin position="1396"/>
        <end position="1406"/>
    </location>
</feature>
<feature type="compositionally biased region" description="Polar residues" evidence="8">
    <location>
        <begin position="1411"/>
        <end position="1421"/>
    </location>
</feature>
<feature type="compositionally biased region" description="Polar residues" evidence="8">
    <location>
        <begin position="1487"/>
        <end position="1498"/>
    </location>
</feature>
<feature type="compositionally biased region" description="Polar residues" evidence="8">
    <location>
        <begin position="1673"/>
        <end position="1683"/>
    </location>
</feature>
<feature type="compositionally biased region" description="Basic and acidic residues" evidence="8">
    <location>
        <begin position="1684"/>
        <end position="1697"/>
    </location>
</feature>
<feature type="compositionally biased region" description="Polar residues" evidence="8">
    <location>
        <begin position="1939"/>
        <end position="1951"/>
    </location>
</feature>
<feature type="compositionally biased region" description="Polar residues" evidence="8">
    <location>
        <begin position="2308"/>
        <end position="2322"/>
    </location>
</feature>
<feature type="compositionally biased region" description="Low complexity" evidence="8">
    <location>
        <begin position="2475"/>
        <end position="2486"/>
    </location>
</feature>
<feature type="compositionally biased region" description="Polar residues" evidence="8">
    <location>
        <begin position="2888"/>
        <end position="2899"/>
    </location>
</feature>
<feature type="compositionally biased region" description="Polar residues" evidence="8">
    <location>
        <begin position="3331"/>
        <end position="3342"/>
    </location>
</feature>
<feature type="site" description="Cleavage; by ADAMTS15" evidence="11">
    <location>
        <begin position="1401"/>
        <end position="1402"/>
    </location>
</feature>
<feature type="modified residue" description="Phosphoserine" evidence="18">
    <location>
        <position position="2585"/>
    </location>
</feature>
<feature type="modified residue" description="Phosphoserine" evidence="18">
    <location>
        <position position="2586"/>
    </location>
</feature>
<feature type="glycosylation site" description="N-linked (GlcNAc...) asparagine" evidence="3">
    <location>
        <position position="57"/>
    </location>
</feature>
<feature type="glycosylation site" description="N-linked (GlcNAc...) asparagine" evidence="3">
    <location>
        <position position="330"/>
    </location>
</feature>
<feature type="glycosylation site" description="N-linked (GlcNAc...) asparagine" evidence="3">
    <location>
        <position position="351"/>
    </location>
</feature>
<feature type="glycosylation site" description="N-linked (GlcNAc...) asparagine" evidence="3">
    <location>
        <position position="441"/>
    </location>
</feature>
<feature type="glycosylation site" description="O-linked (Xyl...) (chondroitin sulfate) serine" evidence="2">
    <location>
        <position position="660"/>
    </location>
</feature>
<feature type="glycosylation site" description="N-linked (GlcNAc...) asparagine" evidence="3">
    <location>
        <position position="807"/>
    </location>
</feature>
<feature type="glycosylation site" description="N-linked (GlcNAc...) asparagine" evidence="3">
    <location>
        <position position="914"/>
    </location>
</feature>
<feature type="glycosylation site" description="N-linked (GlcNAc...) asparagine" evidence="3">
    <location>
        <position position="951"/>
    </location>
</feature>
<feature type="glycosylation site" description="N-linked (GlcNAc...) asparagine" evidence="3">
    <location>
        <position position="1305"/>
    </location>
</feature>
<feature type="glycosylation site" description="N-linked (GlcNAc...) asparagine" evidence="3">
    <location>
        <position position="1371"/>
    </location>
</feature>
<feature type="glycosylation site" description="O-linked (Xyl...) (chondroitin sulfate) serine" evidence="2">
    <location>
        <position position="1517"/>
    </location>
</feature>
<feature type="glycosylation site" description="O-linked (Xyl...) (chondroitin sulfate) serine" evidence="2">
    <location>
        <position position="1599"/>
    </location>
</feature>
<feature type="glycosylation site" description="N-linked (GlcNAc...) asparagine" evidence="3">
    <location>
        <position position="1678"/>
    </location>
</feature>
<feature type="glycosylation site" description="O-linked (Xyl...) (chondroitin sulfate) serine" evidence="2">
    <location>
        <position position="1907"/>
    </location>
</feature>
<feature type="glycosylation site" description="O-linked (Xyl...) (chondroitin sulfate) serine" evidence="2">
    <location>
        <position position="1931"/>
    </location>
</feature>
<feature type="glycosylation site" description="N-linked (GlcNAc...) asparagine" evidence="3">
    <location>
        <position position="2053"/>
    </location>
</feature>
<feature type="glycosylation site" description="O-linked (Xyl...) (chondroitin sulfate) serine" evidence="2">
    <location>
        <position position="2219"/>
    </location>
</feature>
<feature type="glycosylation site" description="O-linked (Xyl...) (chondroitin sulfate) serine" evidence="2">
    <location>
        <position position="2226"/>
    </location>
</feature>
<feature type="glycosylation site" description="N-linked (GlcNAc...) asparagine" evidence="3">
    <location>
        <position position="2243"/>
    </location>
</feature>
<feature type="glycosylation site" description="N-linked (GlcNAc...) asparagine" evidence="3">
    <location>
        <position position="2361"/>
    </location>
</feature>
<feature type="glycosylation site" description="N-linked (GlcNAc...) asparagine" evidence="3">
    <location>
        <position position="2626"/>
    </location>
</feature>
<feature type="glycosylation site" description="O-linked (Xyl...) (chondroitin sulfate) serine" evidence="3">
    <location>
        <position position="2696"/>
    </location>
</feature>
<feature type="glycosylation site" description="O-linked (Xyl...) (chondroitin sulfate) serine" evidence="3">
    <location>
        <position position="2697"/>
    </location>
</feature>
<feature type="glycosylation site" description="O-linked (Xyl...) (chondroitin sulfate) serine" evidence="2">
    <location>
        <position position="2741"/>
    </location>
</feature>
<feature type="glycosylation site" description="N-linked (GlcNAc...) asparagine" evidence="3">
    <location>
        <position position="3029"/>
    </location>
</feature>
<feature type="glycosylation site" description="N-linked (GlcNAc...) asparagine" evidence="3">
    <location>
        <position position="3331"/>
    </location>
</feature>
<feature type="glycosylation site" description="N-linked (GlcNAc...) asparagine" evidence="3">
    <location>
        <position position="3341"/>
    </location>
</feature>
<feature type="disulfide bond" evidence="1">
    <location>
        <begin position="44"/>
        <end position="130"/>
    </location>
</feature>
<feature type="disulfide bond" evidence="1">
    <location>
        <begin position="172"/>
        <end position="243"/>
    </location>
</feature>
<feature type="disulfide bond" evidence="1">
    <location>
        <begin position="196"/>
        <end position="217"/>
    </location>
</feature>
<feature type="disulfide bond" evidence="1">
    <location>
        <begin position="270"/>
        <end position="333"/>
    </location>
</feature>
<feature type="disulfide bond" evidence="1">
    <location>
        <begin position="294"/>
        <end position="315"/>
    </location>
</feature>
<feature type="disulfide bond" evidence="1">
    <location>
        <begin position="3055"/>
        <end position="3066"/>
    </location>
</feature>
<feature type="disulfide bond" evidence="1">
    <location>
        <begin position="3060"/>
        <end position="3075"/>
    </location>
</feature>
<feature type="disulfide bond" evidence="1">
    <location>
        <begin position="3077"/>
        <end position="3086"/>
    </location>
</feature>
<feature type="disulfide bond" evidence="1">
    <location>
        <begin position="3093"/>
        <end position="3104"/>
    </location>
</feature>
<feature type="disulfide bond" evidence="1">
    <location>
        <begin position="3098"/>
        <end position="3113"/>
    </location>
</feature>
<feature type="disulfide bond" evidence="1">
    <location>
        <begin position="3115"/>
        <end position="3124"/>
    </location>
</feature>
<feature type="disulfide bond" evidence="1">
    <location>
        <begin position="3131"/>
        <end position="3142"/>
    </location>
</feature>
<feature type="disulfide bond" evidence="1">
    <location>
        <begin position="3159"/>
        <end position="3251"/>
    </location>
</feature>
<feature type="disulfide bond" evidence="1">
    <location>
        <begin position="3227"/>
        <end position="3243"/>
    </location>
</feature>
<feature type="disulfide bond" evidence="1">
    <location>
        <begin position="3258"/>
        <end position="3301"/>
    </location>
</feature>
<feature type="disulfide bond" evidence="1">
    <location>
        <begin position="3287"/>
        <end position="3314"/>
    </location>
</feature>
<feature type="splice variant" id="VSP_003087" description="In isoform V1 and isoform V3." evidence="14 15 16">
    <original>P</original>
    <variation>R</variation>
    <location>
        <position position="348"/>
    </location>
</feature>
<feature type="splice variant" id="VSP_003090" description="In isoform V3." evidence="16">
    <location>
        <begin position="349"/>
        <end position="3051"/>
    </location>
</feature>
<feature type="splice variant" id="VSP_003088" description="In isoform V1." evidence="14 15">
    <location>
        <begin position="349"/>
        <end position="1308"/>
    </location>
</feature>
<feature type="splice variant" id="VSP_003089" description="In isoform V2." evidence="15">
    <location>
        <begin position="1309"/>
        <end position="3051"/>
    </location>
</feature>
<feature type="sequence conflict" description="In Ref. 3." evidence="17" ref="3">
    <original>A</original>
    <variation>G</variation>
    <location>
        <position position="126"/>
    </location>
</feature>
<feature type="sequence conflict" description="In Ref. 3." evidence="17" ref="3">
    <original>I</original>
    <variation>T</variation>
    <location>
        <position position="1657"/>
    </location>
</feature>
<feature type="sequence conflict" description="In Ref. 3." evidence="17" ref="3">
    <original>TVWNSNS</original>
    <variation>QFGIQTA</variation>
    <location>
        <begin position="1673"/>
        <end position="1679"/>
    </location>
</feature>